<sequence>MSWTIGRPDAEAPEDRMAASHLFTRLDDLVAWSRKHSLWPFNFGLSCCYVEMATALTPVYDQARFGAEVIRSTPRQADLLIVSGTVFRKMAVPLYRLYSQMREPRWVISMGACANSGGMYDIYSVVQGVDSFLPVDVYVPGCPPRPEALMEALVLLQSKIATEARPLQIRMGETGPARPFDPIPRRDALREARMAVTRLADPEAT</sequence>
<accession>A3PKI1</accession>
<name>NUOB2_CERS1</name>
<feature type="chain" id="PRO_0000376333" description="NADH-quinone oxidoreductase subunit B 2">
    <location>
        <begin position="1"/>
        <end position="205"/>
    </location>
</feature>
<feature type="binding site" evidence="1">
    <location>
        <position position="47"/>
    </location>
    <ligand>
        <name>[4Fe-4S] cluster</name>
        <dbReference type="ChEBI" id="CHEBI:49883"/>
    </ligand>
</feature>
<feature type="binding site" evidence="1">
    <location>
        <position position="48"/>
    </location>
    <ligand>
        <name>[4Fe-4S] cluster</name>
        <dbReference type="ChEBI" id="CHEBI:49883"/>
    </ligand>
</feature>
<feature type="binding site" evidence="1">
    <location>
        <position position="113"/>
    </location>
    <ligand>
        <name>[4Fe-4S] cluster</name>
        <dbReference type="ChEBI" id="CHEBI:49883"/>
    </ligand>
</feature>
<feature type="binding site" evidence="1">
    <location>
        <position position="142"/>
    </location>
    <ligand>
        <name>[4Fe-4S] cluster</name>
        <dbReference type="ChEBI" id="CHEBI:49883"/>
    </ligand>
</feature>
<organism>
    <name type="scientific">Cereibacter sphaeroides (strain ATCC 17029 / ATH 2.4.9)</name>
    <name type="common">Rhodobacter sphaeroides</name>
    <dbReference type="NCBI Taxonomy" id="349101"/>
    <lineage>
        <taxon>Bacteria</taxon>
        <taxon>Pseudomonadati</taxon>
        <taxon>Pseudomonadota</taxon>
        <taxon>Alphaproteobacteria</taxon>
        <taxon>Rhodobacterales</taxon>
        <taxon>Paracoccaceae</taxon>
        <taxon>Cereibacter</taxon>
    </lineage>
</organism>
<reference key="1">
    <citation type="submission" date="2007-02" db="EMBL/GenBank/DDBJ databases">
        <title>Complete sequence of chromosome 1 of Rhodobacter sphaeroides ATCC 17029.</title>
        <authorList>
            <person name="Copeland A."/>
            <person name="Lucas S."/>
            <person name="Lapidus A."/>
            <person name="Barry K."/>
            <person name="Detter J.C."/>
            <person name="Glavina del Rio T."/>
            <person name="Hammon N."/>
            <person name="Israni S."/>
            <person name="Dalin E."/>
            <person name="Tice H."/>
            <person name="Pitluck S."/>
            <person name="Kiss H."/>
            <person name="Brettin T."/>
            <person name="Bruce D."/>
            <person name="Han C."/>
            <person name="Tapia R."/>
            <person name="Gilna P."/>
            <person name="Schmutz J."/>
            <person name="Larimer F."/>
            <person name="Land M."/>
            <person name="Hauser L."/>
            <person name="Kyrpides N."/>
            <person name="Mikhailova N."/>
            <person name="Richardson P."/>
            <person name="Mackenzie C."/>
            <person name="Choudhary M."/>
            <person name="Donohue T.J."/>
            <person name="Kaplan S."/>
        </authorList>
    </citation>
    <scope>NUCLEOTIDE SEQUENCE [LARGE SCALE GENOMIC DNA]</scope>
    <source>
        <strain>ATCC 17029 / ATH 2.4.9</strain>
    </source>
</reference>
<dbReference type="EC" id="7.1.1.-" evidence="1"/>
<dbReference type="EMBL" id="CP000577">
    <property type="protein sequence ID" value="ABN76847.1"/>
    <property type="molecule type" value="Genomic_DNA"/>
</dbReference>
<dbReference type="RefSeq" id="WP_011841209.1">
    <property type="nucleotide sequence ID" value="NC_009049.1"/>
</dbReference>
<dbReference type="SMR" id="A3PKI1"/>
<dbReference type="KEGG" id="rsh:Rsph17029_1737"/>
<dbReference type="HOGENOM" id="CLU_055737_7_3_5"/>
<dbReference type="GO" id="GO:0005886">
    <property type="term" value="C:plasma membrane"/>
    <property type="evidence" value="ECO:0007669"/>
    <property type="project" value="UniProtKB-SubCell"/>
</dbReference>
<dbReference type="GO" id="GO:0045271">
    <property type="term" value="C:respiratory chain complex I"/>
    <property type="evidence" value="ECO:0007669"/>
    <property type="project" value="TreeGrafter"/>
</dbReference>
<dbReference type="GO" id="GO:0051539">
    <property type="term" value="F:4 iron, 4 sulfur cluster binding"/>
    <property type="evidence" value="ECO:0007669"/>
    <property type="project" value="UniProtKB-KW"/>
</dbReference>
<dbReference type="GO" id="GO:0005506">
    <property type="term" value="F:iron ion binding"/>
    <property type="evidence" value="ECO:0007669"/>
    <property type="project" value="UniProtKB-UniRule"/>
</dbReference>
<dbReference type="GO" id="GO:0008137">
    <property type="term" value="F:NADH dehydrogenase (ubiquinone) activity"/>
    <property type="evidence" value="ECO:0007669"/>
    <property type="project" value="InterPro"/>
</dbReference>
<dbReference type="GO" id="GO:0050136">
    <property type="term" value="F:NADH:ubiquinone reductase (non-electrogenic) activity"/>
    <property type="evidence" value="ECO:0007669"/>
    <property type="project" value="UniProtKB-UniRule"/>
</dbReference>
<dbReference type="GO" id="GO:0048038">
    <property type="term" value="F:quinone binding"/>
    <property type="evidence" value="ECO:0007669"/>
    <property type="project" value="UniProtKB-KW"/>
</dbReference>
<dbReference type="GO" id="GO:0009060">
    <property type="term" value="P:aerobic respiration"/>
    <property type="evidence" value="ECO:0007669"/>
    <property type="project" value="TreeGrafter"/>
</dbReference>
<dbReference type="GO" id="GO:0015990">
    <property type="term" value="P:electron transport coupled proton transport"/>
    <property type="evidence" value="ECO:0007669"/>
    <property type="project" value="TreeGrafter"/>
</dbReference>
<dbReference type="FunFam" id="3.40.50.12280:FF:000002">
    <property type="entry name" value="NADH-quinone oxidoreductase subunit B"/>
    <property type="match status" value="1"/>
</dbReference>
<dbReference type="Gene3D" id="3.40.50.12280">
    <property type="match status" value="1"/>
</dbReference>
<dbReference type="HAMAP" id="MF_01356">
    <property type="entry name" value="NDH1_NuoB"/>
    <property type="match status" value="1"/>
</dbReference>
<dbReference type="InterPro" id="IPR006137">
    <property type="entry name" value="NADH_UbQ_OxRdtase-like_20kDa"/>
</dbReference>
<dbReference type="InterPro" id="IPR006138">
    <property type="entry name" value="NADH_UQ_OxRdtase_20Kd_su"/>
</dbReference>
<dbReference type="NCBIfam" id="TIGR01957">
    <property type="entry name" value="nuoB_fam"/>
    <property type="match status" value="1"/>
</dbReference>
<dbReference type="NCBIfam" id="NF005012">
    <property type="entry name" value="PRK06411.1"/>
    <property type="match status" value="1"/>
</dbReference>
<dbReference type="PANTHER" id="PTHR11995">
    <property type="entry name" value="NADH DEHYDROGENASE"/>
    <property type="match status" value="1"/>
</dbReference>
<dbReference type="PANTHER" id="PTHR11995:SF14">
    <property type="entry name" value="NADH DEHYDROGENASE [UBIQUINONE] IRON-SULFUR PROTEIN 7, MITOCHONDRIAL"/>
    <property type="match status" value="1"/>
</dbReference>
<dbReference type="Pfam" id="PF01058">
    <property type="entry name" value="Oxidored_q6"/>
    <property type="match status" value="1"/>
</dbReference>
<dbReference type="SUPFAM" id="SSF56770">
    <property type="entry name" value="HydA/Nqo6-like"/>
    <property type="match status" value="1"/>
</dbReference>
<dbReference type="PROSITE" id="PS01150">
    <property type="entry name" value="COMPLEX1_20K"/>
    <property type="match status" value="1"/>
</dbReference>
<gene>
    <name evidence="1" type="primary">nuoB2</name>
    <name type="ordered locus">Rsph17029_1737</name>
</gene>
<proteinExistence type="inferred from homology"/>
<keyword id="KW-0004">4Fe-4S</keyword>
<keyword id="KW-0997">Cell inner membrane</keyword>
<keyword id="KW-1003">Cell membrane</keyword>
<keyword id="KW-0408">Iron</keyword>
<keyword id="KW-0411">Iron-sulfur</keyword>
<keyword id="KW-0472">Membrane</keyword>
<keyword id="KW-0479">Metal-binding</keyword>
<keyword id="KW-0520">NAD</keyword>
<keyword id="KW-0874">Quinone</keyword>
<keyword id="KW-1278">Translocase</keyword>
<keyword id="KW-0813">Transport</keyword>
<keyword id="KW-0830">Ubiquinone</keyword>
<protein>
    <recommendedName>
        <fullName evidence="1">NADH-quinone oxidoreductase subunit B 2</fullName>
        <ecNumber evidence="1">7.1.1.-</ecNumber>
    </recommendedName>
    <alternativeName>
        <fullName evidence="1">NADH dehydrogenase I subunit B 2</fullName>
    </alternativeName>
    <alternativeName>
        <fullName evidence="1">NDH-1 subunit B 2</fullName>
    </alternativeName>
</protein>
<comment type="function">
    <text evidence="1">NDH-1 shuttles electrons from NADH, via FMN and iron-sulfur (Fe-S) centers, to quinones in the respiratory chain. The immediate electron acceptor for the enzyme in this species is believed to be ubiquinone. Couples the redox reaction to proton translocation (for every two electrons transferred, four hydrogen ions are translocated across the cytoplasmic membrane), and thus conserves the redox energy in a proton gradient.</text>
</comment>
<comment type="catalytic activity">
    <reaction evidence="1">
        <text>a quinone + NADH + 5 H(+)(in) = a quinol + NAD(+) + 4 H(+)(out)</text>
        <dbReference type="Rhea" id="RHEA:57888"/>
        <dbReference type="ChEBI" id="CHEBI:15378"/>
        <dbReference type="ChEBI" id="CHEBI:24646"/>
        <dbReference type="ChEBI" id="CHEBI:57540"/>
        <dbReference type="ChEBI" id="CHEBI:57945"/>
        <dbReference type="ChEBI" id="CHEBI:132124"/>
    </reaction>
</comment>
<comment type="cofactor">
    <cofactor evidence="1">
        <name>[4Fe-4S] cluster</name>
        <dbReference type="ChEBI" id="CHEBI:49883"/>
    </cofactor>
    <text evidence="1">Binds 1 [4Fe-4S] cluster.</text>
</comment>
<comment type="subunit">
    <text evidence="1">NDH-1 is composed of 14 different subunits. Subunits NuoB, C, D, E, F, and G constitute the peripheral sector of the complex.</text>
</comment>
<comment type="subcellular location">
    <subcellularLocation>
        <location evidence="1">Cell inner membrane</location>
        <topology evidence="1">Peripheral membrane protein</topology>
        <orientation evidence="1">Cytoplasmic side</orientation>
    </subcellularLocation>
</comment>
<comment type="similarity">
    <text evidence="1">Belongs to the complex I 20 kDa subunit family.</text>
</comment>
<evidence type="ECO:0000255" key="1">
    <source>
        <dbReference type="HAMAP-Rule" id="MF_01356"/>
    </source>
</evidence>